<accession>Q5L3Y1</accession>
<keyword id="KW-0002">3D-structure</keyword>
<keyword id="KW-0315">Glutamine amidotransferase</keyword>
<keyword id="KW-0378">Hydrolase</keyword>
<keyword id="KW-0456">Lyase</keyword>
<keyword id="KW-0663">Pyridoxal phosphate</keyword>
<keyword id="KW-1185">Reference proteome</keyword>
<feature type="chain" id="PRO_0000135639" description="Pyridoxal 5'-phosphate synthase subunit PdxT">
    <location>
        <begin position="1"/>
        <end position="196"/>
    </location>
</feature>
<feature type="active site" description="Nucleophile" evidence="1">
    <location>
        <position position="78"/>
    </location>
</feature>
<feature type="active site" description="Charge relay system" evidence="1">
    <location>
        <position position="169"/>
    </location>
</feature>
<feature type="active site" description="Charge relay system" evidence="1">
    <location>
        <position position="171"/>
    </location>
</feature>
<feature type="binding site" evidence="1">
    <location>
        <begin position="46"/>
        <end position="48"/>
    </location>
    <ligand>
        <name>L-glutamine</name>
        <dbReference type="ChEBI" id="CHEBI:58359"/>
    </ligand>
</feature>
<feature type="binding site" evidence="1">
    <location>
        <position position="105"/>
    </location>
    <ligand>
        <name>L-glutamine</name>
        <dbReference type="ChEBI" id="CHEBI:58359"/>
    </ligand>
</feature>
<feature type="binding site" evidence="1">
    <location>
        <begin position="133"/>
        <end position="134"/>
    </location>
    <ligand>
        <name>L-glutamine</name>
        <dbReference type="ChEBI" id="CHEBI:58359"/>
    </ligand>
</feature>
<feature type="strand" evidence="2">
    <location>
        <begin position="2"/>
        <end position="6"/>
    </location>
</feature>
<feature type="strand" evidence="2">
    <location>
        <begin position="8"/>
        <end position="11"/>
    </location>
</feature>
<feature type="helix" evidence="2">
    <location>
        <begin position="12"/>
        <end position="21"/>
    </location>
</feature>
<feature type="strand" evidence="2">
    <location>
        <begin position="25"/>
        <end position="31"/>
    </location>
</feature>
<feature type="helix" evidence="2">
    <location>
        <begin position="32"/>
        <end position="35"/>
    </location>
</feature>
<feature type="strand" evidence="2">
    <location>
        <begin position="39"/>
        <end position="43"/>
    </location>
</feature>
<feature type="helix" evidence="2">
    <location>
        <begin position="48"/>
        <end position="57"/>
    </location>
</feature>
<feature type="helix" evidence="2">
    <location>
        <begin position="61"/>
        <end position="69"/>
    </location>
</feature>
<feature type="strand" evidence="2">
    <location>
        <begin position="74"/>
        <end position="77"/>
    </location>
</feature>
<feature type="helix" evidence="2">
    <location>
        <begin position="79"/>
        <end position="84"/>
    </location>
</feature>
<feature type="strand" evidence="2">
    <location>
        <begin position="85"/>
        <end position="88"/>
    </location>
</feature>
<feature type="strand" evidence="2">
    <location>
        <begin position="99"/>
        <end position="104"/>
    </location>
</feature>
<feature type="turn" evidence="2">
    <location>
        <begin position="105"/>
        <end position="108"/>
    </location>
</feature>
<feature type="helix" evidence="2">
    <location>
        <begin position="111"/>
        <end position="113"/>
    </location>
</feature>
<feature type="strand" evidence="2">
    <location>
        <begin position="115"/>
        <end position="119"/>
    </location>
</feature>
<feature type="strand" evidence="2">
    <location>
        <begin position="128"/>
        <end position="134"/>
    </location>
</feature>
<feature type="strand" evidence="2">
    <location>
        <begin position="137"/>
        <end position="141"/>
    </location>
</feature>
<feature type="strand" evidence="2">
    <location>
        <begin position="146"/>
        <end position="151"/>
    </location>
</feature>
<feature type="strand" evidence="2">
    <location>
        <begin position="154"/>
        <end position="160"/>
    </location>
</feature>
<feature type="strand" evidence="2">
    <location>
        <begin position="163"/>
        <end position="168"/>
    </location>
</feature>
<feature type="helix" evidence="2">
    <location>
        <begin position="170"/>
        <end position="172"/>
    </location>
</feature>
<feature type="helix" evidence="2">
    <location>
        <begin position="177"/>
        <end position="188"/>
    </location>
</feature>
<gene>
    <name evidence="1" type="primary">pdxT</name>
    <name type="ordered locus">GK0012</name>
</gene>
<proteinExistence type="evidence at protein level"/>
<comment type="function">
    <text evidence="1">Catalyzes the hydrolysis of glutamine to glutamate and ammonia as part of the biosynthesis of pyridoxal 5'-phosphate. The resulting ammonia molecule is channeled to the active site of PdxS.</text>
</comment>
<comment type="catalytic activity">
    <reaction evidence="1">
        <text>aldehydo-D-ribose 5-phosphate + D-glyceraldehyde 3-phosphate + L-glutamine = pyridoxal 5'-phosphate + L-glutamate + phosphate + 3 H2O + H(+)</text>
        <dbReference type="Rhea" id="RHEA:31507"/>
        <dbReference type="ChEBI" id="CHEBI:15377"/>
        <dbReference type="ChEBI" id="CHEBI:15378"/>
        <dbReference type="ChEBI" id="CHEBI:29985"/>
        <dbReference type="ChEBI" id="CHEBI:43474"/>
        <dbReference type="ChEBI" id="CHEBI:58273"/>
        <dbReference type="ChEBI" id="CHEBI:58359"/>
        <dbReference type="ChEBI" id="CHEBI:59776"/>
        <dbReference type="ChEBI" id="CHEBI:597326"/>
        <dbReference type="EC" id="4.3.3.6"/>
    </reaction>
</comment>
<comment type="catalytic activity">
    <reaction evidence="1">
        <text>L-glutamine + H2O = L-glutamate + NH4(+)</text>
        <dbReference type="Rhea" id="RHEA:15889"/>
        <dbReference type="ChEBI" id="CHEBI:15377"/>
        <dbReference type="ChEBI" id="CHEBI:28938"/>
        <dbReference type="ChEBI" id="CHEBI:29985"/>
        <dbReference type="ChEBI" id="CHEBI:58359"/>
        <dbReference type="EC" id="3.5.1.2"/>
    </reaction>
</comment>
<comment type="pathway">
    <text evidence="1">Cofactor biosynthesis; pyridoxal 5'-phosphate biosynthesis.</text>
</comment>
<comment type="subunit">
    <text evidence="1">In the presence of PdxS, forms a dodecamer of heterodimers. Only shows activity in the heterodimer.</text>
</comment>
<comment type="similarity">
    <text evidence="1">Belongs to the glutaminase PdxT/SNO family.</text>
</comment>
<dbReference type="EC" id="4.3.3.6" evidence="1"/>
<dbReference type="EC" id="3.5.1.2" evidence="1"/>
<dbReference type="EMBL" id="BA000043">
    <property type="protein sequence ID" value="BAD74297.1"/>
    <property type="molecule type" value="Genomic_DNA"/>
</dbReference>
<dbReference type="RefSeq" id="WP_011229528.1">
    <property type="nucleotide sequence ID" value="NC_006510.1"/>
</dbReference>
<dbReference type="PDB" id="4WXY">
    <property type="method" value="X-ray"/>
    <property type="resolution" value="2.70 A"/>
    <property type="chains" value="B/D/F/H/J/L=1-196"/>
</dbReference>
<dbReference type="PDBsum" id="4WXY"/>
<dbReference type="SMR" id="Q5L3Y1"/>
<dbReference type="STRING" id="235909.GK0012"/>
<dbReference type="GeneID" id="32065393"/>
<dbReference type="KEGG" id="gka:GK0012"/>
<dbReference type="eggNOG" id="COG0311">
    <property type="taxonomic scope" value="Bacteria"/>
</dbReference>
<dbReference type="HOGENOM" id="CLU_069674_2_0_9"/>
<dbReference type="BRENDA" id="4.3.3.6">
    <property type="organism ID" value="8138"/>
</dbReference>
<dbReference type="UniPathway" id="UPA00245"/>
<dbReference type="EvolutionaryTrace" id="Q5L3Y1"/>
<dbReference type="Proteomes" id="UP000001172">
    <property type="component" value="Chromosome"/>
</dbReference>
<dbReference type="GO" id="GO:0005829">
    <property type="term" value="C:cytosol"/>
    <property type="evidence" value="ECO:0007669"/>
    <property type="project" value="TreeGrafter"/>
</dbReference>
<dbReference type="GO" id="GO:1903600">
    <property type="term" value="C:glutaminase complex"/>
    <property type="evidence" value="ECO:0007669"/>
    <property type="project" value="TreeGrafter"/>
</dbReference>
<dbReference type="GO" id="GO:0004359">
    <property type="term" value="F:glutaminase activity"/>
    <property type="evidence" value="ECO:0007669"/>
    <property type="project" value="UniProtKB-UniRule"/>
</dbReference>
<dbReference type="GO" id="GO:0036381">
    <property type="term" value="F:pyridoxal 5'-phosphate synthase (glutamine hydrolysing) activity"/>
    <property type="evidence" value="ECO:0007669"/>
    <property type="project" value="UniProtKB-UniRule"/>
</dbReference>
<dbReference type="GO" id="GO:0006543">
    <property type="term" value="P:glutamine catabolic process"/>
    <property type="evidence" value="ECO:0007669"/>
    <property type="project" value="UniProtKB-UniRule"/>
</dbReference>
<dbReference type="GO" id="GO:0042823">
    <property type="term" value="P:pyridoxal phosphate biosynthetic process"/>
    <property type="evidence" value="ECO:0007669"/>
    <property type="project" value="UniProtKB-UniRule"/>
</dbReference>
<dbReference type="GO" id="GO:0008614">
    <property type="term" value="P:pyridoxine metabolic process"/>
    <property type="evidence" value="ECO:0007669"/>
    <property type="project" value="TreeGrafter"/>
</dbReference>
<dbReference type="CDD" id="cd01749">
    <property type="entry name" value="GATase1_PB"/>
    <property type="match status" value="1"/>
</dbReference>
<dbReference type="FunFam" id="3.40.50.880:FF:000010">
    <property type="entry name" value="uncharacterized protein LOC100176842 isoform X2"/>
    <property type="match status" value="1"/>
</dbReference>
<dbReference type="Gene3D" id="3.40.50.880">
    <property type="match status" value="1"/>
</dbReference>
<dbReference type="HAMAP" id="MF_01615">
    <property type="entry name" value="PdxT"/>
    <property type="match status" value="1"/>
</dbReference>
<dbReference type="InterPro" id="IPR029062">
    <property type="entry name" value="Class_I_gatase-like"/>
</dbReference>
<dbReference type="InterPro" id="IPR002161">
    <property type="entry name" value="PdxT/SNO"/>
</dbReference>
<dbReference type="InterPro" id="IPR021196">
    <property type="entry name" value="PdxT/SNO_CS"/>
</dbReference>
<dbReference type="NCBIfam" id="TIGR03800">
    <property type="entry name" value="PLP_synth_Pdx2"/>
    <property type="match status" value="1"/>
</dbReference>
<dbReference type="PANTHER" id="PTHR31559">
    <property type="entry name" value="PYRIDOXAL 5'-PHOSPHATE SYNTHASE SUBUNIT SNO"/>
    <property type="match status" value="1"/>
</dbReference>
<dbReference type="PANTHER" id="PTHR31559:SF0">
    <property type="entry name" value="PYRIDOXAL 5'-PHOSPHATE SYNTHASE SUBUNIT SNO1-RELATED"/>
    <property type="match status" value="1"/>
</dbReference>
<dbReference type="Pfam" id="PF01174">
    <property type="entry name" value="SNO"/>
    <property type="match status" value="1"/>
</dbReference>
<dbReference type="PIRSF" id="PIRSF005639">
    <property type="entry name" value="Glut_amidoT_SNO"/>
    <property type="match status" value="1"/>
</dbReference>
<dbReference type="SUPFAM" id="SSF52317">
    <property type="entry name" value="Class I glutamine amidotransferase-like"/>
    <property type="match status" value="1"/>
</dbReference>
<dbReference type="PROSITE" id="PS01236">
    <property type="entry name" value="PDXT_SNO_1"/>
    <property type="match status" value="1"/>
</dbReference>
<dbReference type="PROSITE" id="PS51130">
    <property type="entry name" value="PDXT_SNO_2"/>
    <property type="match status" value="1"/>
</dbReference>
<evidence type="ECO:0000255" key="1">
    <source>
        <dbReference type="HAMAP-Rule" id="MF_01615"/>
    </source>
</evidence>
<evidence type="ECO:0007829" key="2">
    <source>
        <dbReference type="PDB" id="4WXY"/>
    </source>
</evidence>
<name>PDXT_GEOKA</name>
<reference key="1">
    <citation type="journal article" date="2004" name="Nucleic Acids Res.">
        <title>Thermoadaptation trait revealed by the genome sequence of thermophilic Geobacillus kaustophilus.</title>
        <authorList>
            <person name="Takami H."/>
            <person name="Takaki Y."/>
            <person name="Chee G.-J."/>
            <person name="Nishi S."/>
            <person name="Shimamura S."/>
            <person name="Suzuki H."/>
            <person name="Matsui S."/>
            <person name="Uchiyama I."/>
        </authorList>
    </citation>
    <scope>NUCLEOTIDE SEQUENCE [LARGE SCALE GENOMIC DNA]</scope>
    <source>
        <strain>HTA426</strain>
    </source>
</reference>
<protein>
    <recommendedName>
        <fullName evidence="1">Pyridoxal 5'-phosphate synthase subunit PdxT</fullName>
        <ecNumber evidence="1">4.3.3.6</ecNumber>
    </recommendedName>
    <alternativeName>
        <fullName evidence="1">Pdx2</fullName>
    </alternativeName>
    <alternativeName>
        <fullName evidence="1">Pyridoxal 5'-phosphate synthase glutaminase subunit</fullName>
        <ecNumber evidence="1">3.5.1.2</ecNumber>
    </alternativeName>
</protein>
<organism>
    <name type="scientific">Geobacillus kaustophilus (strain HTA426)</name>
    <dbReference type="NCBI Taxonomy" id="235909"/>
    <lineage>
        <taxon>Bacteria</taxon>
        <taxon>Bacillati</taxon>
        <taxon>Bacillota</taxon>
        <taxon>Bacilli</taxon>
        <taxon>Bacillales</taxon>
        <taxon>Anoxybacillaceae</taxon>
        <taxon>Geobacillus</taxon>
        <taxon>Geobacillus thermoleovorans group</taxon>
    </lineage>
</organism>
<sequence>MKIGVLGLQGAVREHVRAIEACGAEAVIVKKPEQLEGLDGLVLPGGESTTMRRLIDRYGLMEPLKQFAAAGKPMFGTCAGLILLAKRIVGYDEPHLGLMDITVERNSFGRQRESFEAELSIKGVGDGFVGVFIRAPHIVEAGDGVDVLATYNDRIVAARQGQFLGCSFHPELTDDHRLMQYFLNMVKEAKMASSLK</sequence>